<organism>
    <name type="scientific">Equine infectious anemia virus (isolate CL22)</name>
    <name type="common">EIAV</name>
    <dbReference type="NCBI Taxonomy" id="31675"/>
    <lineage>
        <taxon>Viruses</taxon>
        <taxon>Riboviria</taxon>
        <taxon>Pararnavirae</taxon>
        <taxon>Artverviricota</taxon>
        <taxon>Revtraviricetes</taxon>
        <taxon>Ortervirales</taxon>
        <taxon>Retroviridae</taxon>
        <taxon>Orthoretrovirinae</taxon>
        <taxon>Lentivirus</taxon>
        <taxon>Equine infectious anemia virus</taxon>
    </lineage>
</organism>
<proteinExistence type="inferred from homology"/>
<dbReference type="EMBL" id="M87581">
    <property type="protein sequence ID" value="AAA43006.1"/>
    <property type="status" value="ALT_SEQ"/>
    <property type="molecule type" value="Genomic_RNA"/>
</dbReference>
<dbReference type="EMBL" id="X63058">
    <property type="protein sequence ID" value="CAA44782.1"/>
    <property type="status" value="ALT_INIT"/>
    <property type="molecule type" value="Genomic_RNA"/>
</dbReference>
<dbReference type="SMR" id="P32543"/>
<dbReference type="GO" id="GO:0030430">
    <property type="term" value="C:host cell cytoplasm"/>
    <property type="evidence" value="ECO:0007669"/>
    <property type="project" value="UniProtKB-SubCell"/>
</dbReference>
<dbReference type="GO" id="GO:0044196">
    <property type="term" value="C:host cell nucleolus"/>
    <property type="evidence" value="ECO:0007669"/>
    <property type="project" value="UniProtKB-SubCell"/>
</dbReference>
<dbReference type="GO" id="GO:0019031">
    <property type="term" value="C:viral envelope"/>
    <property type="evidence" value="ECO:0007669"/>
    <property type="project" value="InterPro"/>
</dbReference>
<dbReference type="GO" id="GO:0003723">
    <property type="term" value="F:RNA binding"/>
    <property type="evidence" value="ECO:0007669"/>
    <property type="project" value="UniProtKB-KW"/>
</dbReference>
<dbReference type="GO" id="GO:0005198">
    <property type="term" value="F:structural molecule activity"/>
    <property type="evidence" value="ECO:0007669"/>
    <property type="project" value="InterPro"/>
</dbReference>
<dbReference type="GO" id="GO:0051028">
    <property type="term" value="P:mRNA transport"/>
    <property type="evidence" value="ECO:0007669"/>
    <property type="project" value="UniProtKB-KW"/>
</dbReference>
<dbReference type="InterPro" id="IPR021311">
    <property type="entry name" value="EIAV_Rev"/>
</dbReference>
<dbReference type="InterPro" id="IPR001361">
    <property type="entry name" value="Gp90_EIAV"/>
</dbReference>
<dbReference type="Pfam" id="PF00971">
    <property type="entry name" value="EIAV_GP90"/>
    <property type="match status" value="1"/>
</dbReference>
<dbReference type="Pfam" id="PF11129">
    <property type="entry name" value="EIAV_Rev"/>
    <property type="match status" value="1"/>
</dbReference>
<evidence type="ECO:0000250" key="1"/>
<evidence type="ECO:0000255" key="2"/>
<evidence type="ECO:0000256" key="3">
    <source>
        <dbReference type="SAM" id="MobiDB-lite"/>
    </source>
</evidence>
<evidence type="ECO:0000305" key="4"/>
<reference key="1">
    <citation type="journal article" date="1992" name="J. Virol.">
        <title>The surface envelope protein gene region of equine infectious anemia virus is not an important determinant of tropism in vitro.</title>
        <authorList>
            <person name="Perry S.T."/>
            <person name="Flaherty M.T."/>
            <person name="Kelley M.J."/>
            <person name="Clabough D.L."/>
            <person name="Tronick S.R."/>
            <person name="Coggins L."/>
            <person name="Whetter L."/>
            <person name="Lengel C.R."/>
            <person name="Fuller F."/>
        </authorList>
    </citation>
    <scope>NUCLEOTIDE SEQUENCE [GENOMIC RNA]</scope>
</reference>
<reference key="2">
    <citation type="journal article" date="1993" name="J. Virol.">
        <title>Structural and functional characterization of rev-like transcripts of equine infectious anemia virus.</title>
        <authorList>
            <person name="Rosin-Arbesfeld R."/>
            <person name="Rivlin M."/>
            <person name="Noiman S."/>
            <person name="Mashiah P."/>
            <person name="Yaniv A."/>
            <person name="Miki T."/>
            <person name="Tronick S.R."/>
            <person name="Gazit A."/>
        </authorList>
    </citation>
    <scope>NUCLEOTIDE SEQUENCE [GENOMIC RNA]</scope>
</reference>
<protein>
    <recommendedName>
        <fullName>Protein Rev</fullName>
    </recommendedName>
    <alternativeName>
        <fullName>3'-ORF protein</fullName>
    </alternativeName>
</protein>
<feature type="chain" id="PRO_0000085477" description="Protein Rev">
    <location>
        <begin position="1"/>
        <end position="165"/>
    </location>
</feature>
<feature type="region of interest" description="Disordered" evidence="3">
    <location>
        <begin position="1"/>
        <end position="36"/>
    </location>
</feature>
<feature type="region of interest" description="Disordered" evidence="3">
    <location>
        <begin position="56"/>
        <end position="77"/>
    </location>
</feature>
<feature type="region of interest" description="RNA-binding (RRE)" evidence="1">
    <location>
        <begin position="57"/>
        <end position="130"/>
    </location>
</feature>
<feature type="region of interest" description="RNA-binding (RRE)" evidence="1">
    <location>
        <begin position="144"/>
        <end position="165"/>
    </location>
</feature>
<feature type="region of interest" description="Disordered" evidence="3">
    <location>
        <begin position="146"/>
        <end position="165"/>
    </location>
</feature>
<feature type="coiled-coil region" evidence="2">
    <location>
        <begin position="1"/>
        <end position="26"/>
    </location>
</feature>
<feature type="short sequence motif" description="Nuclear export signal" evidence="1">
    <location>
        <begin position="32"/>
        <end position="55"/>
    </location>
</feature>
<feature type="short sequence motif" description="Nuclear localization signal" evidence="1">
    <location>
        <begin position="159"/>
        <end position="163"/>
    </location>
</feature>
<feature type="compositionally biased region" description="Basic and acidic residues" evidence="3">
    <location>
        <begin position="1"/>
        <end position="32"/>
    </location>
</feature>
<sequence length="165" mass="19810">MAESKEARDQEMNLKEESKEEKRRNDWWKKDPQGPLESDQWCRVLRQSLPEEKIPSQTCIARRHLGPGPTQHTPSRRDRWIRGQILQTEVLQERLEWRIRGVQQAAKELGEVNRGIWRELYFREDQRGDFSAWGGYQRAQERLWGEQSSPRVLRPGDSKRRRKHL</sequence>
<organismHost>
    <name type="scientific">Equus asinus</name>
    <name type="common">Donkey</name>
    <name type="synonym">Equus africanus asinus</name>
    <dbReference type="NCBI Taxonomy" id="9793"/>
</organismHost>
<organismHost>
    <name type="scientific">Equus caballus</name>
    <name type="common">Horse</name>
    <dbReference type="NCBI Taxonomy" id="9796"/>
</organismHost>
<keyword id="KW-0175">Coiled coil</keyword>
<keyword id="KW-1035">Host cytoplasm</keyword>
<keyword id="KW-1048">Host nucleus</keyword>
<keyword id="KW-0509">mRNA transport</keyword>
<keyword id="KW-0694">RNA-binding</keyword>
<keyword id="KW-0813">Transport</keyword>
<accession>P32543</accession>
<name>REV_EIAVC</name>
<comment type="function">
    <text evidence="1">Escorts unspliced or incompletely spliced viral pre-mRNAs (late transcripts) out of the nucleus of infected cells. These pre-mRNAs carry two recognition sequences that function as Rev responsive element (RRE), that are not present in fully spliced viral mRNAs (early transcripts). This function is essential since most viral proteins are translated from unspliced or partially spliced pre-mRNAs which cannot exit the nucleus by the pathway used by fully processed cellular mRNAs (By similarity).</text>
</comment>
<comment type="subunit">
    <text evidence="1">Homomultimer; when bound to the RRE. Multimeric assembly is essential for activity (By similarity).</text>
</comment>
<comment type="subcellular location">
    <subcellularLocation>
        <location evidence="1">Host nucleus</location>
        <location evidence="1">Host nucleolus</location>
    </subcellularLocation>
    <subcellularLocation>
        <location evidence="1">Host cytoplasm</location>
    </subcellularLocation>
    <text evidence="1">The presence of both nuclear import and nuclear export signals leads to continuous shuttling between the nucleus and cytoplasm.</text>
</comment>
<comment type="domain">
    <text evidence="1">The bipartite RNA-binding motif binds to the RREs present in incompletely spliced viral pre-mRNAs. It consists of a central region, and a C-terminal region that also contains the NLS which mediates nuclear localization. These overlapping functions prevent Rev bound to RRE from undesirable return to the nucleus. When Rev binds the RRE, the NLS becomes masked while the NES remains accessible (By similarity).</text>
</comment>
<comment type="sequence caution" evidence="4">
    <conflict type="erroneous initiation">
        <sequence resource="EMBL-CDS" id="CAA44782"/>
    </conflict>
</comment>
<gene>
    <name type="primary">rev</name>
</gene>